<proteinExistence type="inferred from homology"/>
<organism>
    <name type="scientific">Escherichia coli O1:K1 / APEC</name>
    <dbReference type="NCBI Taxonomy" id="405955"/>
    <lineage>
        <taxon>Bacteria</taxon>
        <taxon>Pseudomonadati</taxon>
        <taxon>Pseudomonadota</taxon>
        <taxon>Gammaproteobacteria</taxon>
        <taxon>Enterobacterales</taxon>
        <taxon>Enterobacteriaceae</taxon>
        <taxon>Escherichia</taxon>
    </lineage>
</organism>
<protein>
    <recommendedName>
        <fullName evidence="1">Gamma-glutamyl phosphate reductase</fullName>
        <shortName evidence="1">GPR</shortName>
        <ecNumber evidence="1">1.2.1.41</ecNumber>
    </recommendedName>
    <alternativeName>
        <fullName evidence="1">Glutamate-5-semialdehyde dehydrogenase</fullName>
    </alternativeName>
    <alternativeName>
        <fullName evidence="1">Glutamyl-gamma-semialdehyde dehydrogenase</fullName>
        <shortName evidence="1">GSA dehydrogenase</shortName>
    </alternativeName>
</protein>
<feature type="chain" id="PRO_1000049949" description="Gamma-glutamyl phosphate reductase">
    <location>
        <begin position="1"/>
        <end position="417"/>
    </location>
</feature>
<dbReference type="EC" id="1.2.1.41" evidence="1"/>
<dbReference type="EMBL" id="CP000468">
    <property type="protein sequence ID" value="ABI99743.1"/>
    <property type="molecule type" value="Genomic_DNA"/>
</dbReference>
<dbReference type="RefSeq" id="WP_000893305.1">
    <property type="nucleotide sequence ID" value="NZ_CADILS010000061.1"/>
</dbReference>
<dbReference type="SMR" id="A1A7V4"/>
<dbReference type="KEGG" id="ecv:APECO1_1726"/>
<dbReference type="HOGENOM" id="CLU_030231_0_0_6"/>
<dbReference type="UniPathway" id="UPA00098">
    <property type="reaction ID" value="UER00360"/>
</dbReference>
<dbReference type="Proteomes" id="UP000008216">
    <property type="component" value="Chromosome"/>
</dbReference>
<dbReference type="GO" id="GO:0005737">
    <property type="term" value="C:cytoplasm"/>
    <property type="evidence" value="ECO:0007669"/>
    <property type="project" value="UniProtKB-SubCell"/>
</dbReference>
<dbReference type="GO" id="GO:0004350">
    <property type="term" value="F:glutamate-5-semialdehyde dehydrogenase activity"/>
    <property type="evidence" value="ECO:0007669"/>
    <property type="project" value="UniProtKB-UniRule"/>
</dbReference>
<dbReference type="GO" id="GO:0050661">
    <property type="term" value="F:NADP binding"/>
    <property type="evidence" value="ECO:0007669"/>
    <property type="project" value="InterPro"/>
</dbReference>
<dbReference type="GO" id="GO:0055129">
    <property type="term" value="P:L-proline biosynthetic process"/>
    <property type="evidence" value="ECO:0007669"/>
    <property type="project" value="UniProtKB-UniRule"/>
</dbReference>
<dbReference type="CDD" id="cd07079">
    <property type="entry name" value="ALDH_F18-19_ProA-GPR"/>
    <property type="match status" value="1"/>
</dbReference>
<dbReference type="FunFam" id="3.40.309.10:FF:000006">
    <property type="entry name" value="Gamma-glutamyl phosphate reductase"/>
    <property type="match status" value="1"/>
</dbReference>
<dbReference type="Gene3D" id="3.40.605.10">
    <property type="entry name" value="Aldehyde Dehydrogenase, Chain A, domain 1"/>
    <property type="match status" value="1"/>
</dbReference>
<dbReference type="Gene3D" id="3.40.309.10">
    <property type="entry name" value="Aldehyde Dehydrogenase, Chain A, domain 2"/>
    <property type="match status" value="1"/>
</dbReference>
<dbReference type="HAMAP" id="MF_00412">
    <property type="entry name" value="ProA"/>
    <property type="match status" value="1"/>
</dbReference>
<dbReference type="InterPro" id="IPR016161">
    <property type="entry name" value="Ald_DH/histidinol_DH"/>
</dbReference>
<dbReference type="InterPro" id="IPR016163">
    <property type="entry name" value="Ald_DH_C"/>
</dbReference>
<dbReference type="InterPro" id="IPR016162">
    <property type="entry name" value="Ald_DH_N"/>
</dbReference>
<dbReference type="InterPro" id="IPR015590">
    <property type="entry name" value="Aldehyde_DH_dom"/>
</dbReference>
<dbReference type="InterPro" id="IPR020593">
    <property type="entry name" value="G-glutamylP_reductase_CS"/>
</dbReference>
<dbReference type="InterPro" id="IPR012134">
    <property type="entry name" value="Glu-5-SA_DH"/>
</dbReference>
<dbReference type="InterPro" id="IPR000965">
    <property type="entry name" value="GPR_dom"/>
</dbReference>
<dbReference type="NCBIfam" id="NF001221">
    <property type="entry name" value="PRK00197.1"/>
    <property type="match status" value="1"/>
</dbReference>
<dbReference type="NCBIfam" id="TIGR00407">
    <property type="entry name" value="proA"/>
    <property type="match status" value="1"/>
</dbReference>
<dbReference type="PANTHER" id="PTHR11063:SF8">
    <property type="entry name" value="DELTA-1-PYRROLINE-5-CARBOXYLATE SYNTHASE"/>
    <property type="match status" value="1"/>
</dbReference>
<dbReference type="PANTHER" id="PTHR11063">
    <property type="entry name" value="GLUTAMATE SEMIALDEHYDE DEHYDROGENASE"/>
    <property type="match status" value="1"/>
</dbReference>
<dbReference type="Pfam" id="PF00171">
    <property type="entry name" value="Aldedh"/>
    <property type="match status" value="1"/>
</dbReference>
<dbReference type="PIRSF" id="PIRSF000151">
    <property type="entry name" value="GPR"/>
    <property type="match status" value="1"/>
</dbReference>
<dbReference type="SUPFAM" id="SSF53720">
    <property type="entry name" value="ALDH-like"/>
    <property type="match status" value="1"/>
</dbReference>
<dbReference type="PROSITE" id="PS01223">
    <property type="entry name" value="PROA"/>
    <property type="match status" value="1"/>
</dbReference>
<evidence type="ECO:0000255" key="1">
    <source>
        <dbReference type="HAMAP-Rule" id="MF_00412"/>
    </source>
</evidence>
<name>PROA_ECOK1</name>
<gene>
    <name evidence="1" type="primary">proA</name>
    <name type="ordered locus">Ecok1_02500</name>
    <name type="ORF">APECO1_1726</name>
</gene>
<sequence>MLEQMGIAAKQASYKLAQLSSREKNRVLEKIADELEAQSESILNANAQDVADARANGLSEAMLDRLALTPARLKGIADDVRQVCNLADPVGQVIDGGVLDSGLRLERRRVPLGVIGVIYEARPNVTVDVASLCLKTGNAVILRGGKETCRTNAATVAVIQDALKSCGLPAGAVQAIDNPDRALVSEMLRMDKYIDMLIPRGGAGLHKLCREQSTIPVITGGIGVCHIYVDESAEIAEALKVIVNAKTQRPSTCNTVETLLVNKNIADSFLPALSKQMAESGVTLHADAAALAQLQAGPAKVVAVKAEEYDDEFLSLDLNVKIVSDLDDAIAHIREHGTQHSDAILTRDMRNAQRFVNEVDSSAVYVNASTRFTDGGQFGLGAEVAVSTQKLHARGPMGLEALTTYKWIGIGDYTIRA</sequence>
<keyword id="KW-0028">Amino-acid biosynthesis</keyword>
<keyword id="KW-0963">Cytoplasm</keyword>
<keyword id="KW-0521">NADP</keyword>
<keyword id="KW-0560">Oxidoreductase</keyword>
<keyword id="KW-0641">Proline biosynthesis</keyword>
<keyword id="KW-1185">Reference proteome</keyword>
<accession>A1A7V4</accession>
<comment type="function">
    <text evidence="1">Catalyzes the NADPH-dependent reduction of L-glutamate 5-phosphate into L-glutamate 5-semialdehyde and phosphate. The product spontaneously undergoes cyclization to form 1-pyrroline-5-carboxylate.</text>
</comment>
<comment type="catalytic activity">
    <reaction evidence="1">
        <text>L-glutamate 5-semialdehyde + phosphate + NADP(+) = L-glutamyl 5-phosphate + NADPH + H(+)</text>
        <dbReference type="Rhea" id="RHEA:19541"/>
        <dbReference type="ChEBI" id="CHEBI:15378"/>
        <dbReference type="ChEBI" id="CHEBI:43474"/>
        <dbReference type="ChEBI" id="CHEBI:57783"/>
        <dbReference type="ChEBI" id="CHEBI:58066"/>
        <dbReference type="ChEBI" id="CHEBI:58274"/>
        <dbReference type="ChEBI" id="CHEBI:58349"/>
        <dbReference type="EC" id="1.2.1.41"/>
    </reaction>
</comment>
<comment type="pathway">
    <text evidence="1">Amino-acid biosynthesis; L-proline biosynthesis; L-glutamate 5-semialdehyde from L-glutamate: step 2/2.</text>
</comment>
<comment type="subcellular location">
    <subcellularLocation>
        <location evidence="1">Cytoplasm</location>
    </subcellularLocation>
</comment>
<comment type="similarity">
    <text evidence="1">Belongs to the gamma-glutamyl phosphate reductase family.</text>
</comment>
<reference key="1">
    <citation type="journal article" date="2007" name="J. Bacteriol.">
        <title>The genome sequence of avian pathogenic Escherichia coli strain O1:K1:H7 shares strong similarities with human extraintestinal pathogenic E. coli genomes.</title>
        <authorList>
            <person name="Johnson T.J."/>
            <person name="Kariyawasam S."/>
            <person name="Wannemuehler Y."/>
            <person name="Mangiamele P."/>
            <person name="Johnson S.J."/>
            <person name="Doetkott C."/>
            <person name="Skyberg J.A."/>
            <person name="Lynne A.M."/>
            <person name="Johnson J.R."/>
            <person name="Nolan L.K."/>
        </authorList>
    </citation>
    <scope>NUCLEOTIDE SEQUENCE [LARGE SCALE GENOMIC DNA]</scope>
</reference>